<name>GB_ALHV1</name>
<organismHost>
    <name type="scientific">Connochaetes taurinus</name>
    <name type="common">Blue wildebeest</name>
    <dbReference type="NCBI Taxonomy" id="9927"/>
</organismHost>
<organism>
    <name type="scientific">Alcelaphine herpesvirus 1 (strain C500)</name>
    <name type="common">AlHV-1</name>
    <name type="synonym">Malignant catarrhal fever virus</name>
    <dbReference type="NCBI Taxonomy" id="654901"/>
    <lineage>
        <taxon>Viruses</taxon>
        <taxon>Duplodnaviria</taxon>
        <taxon>Heunggongvirae</taxon>
        <taxon>Peploviricota</taxon>
        <taxon>Herviviricetes</taxon>
        <taxon>Herpesvirales</taxon>
        <taxon>Orthoherpesviridae</taxon>
        <taxon>Gammaherpesvirinae</taxon>
        <taxon>Macavirus</taxon>
        <taxon>Macavirus alcelaphinegamma1</taxon>
    </lineage>
</organism>
<comment type="function">
    <text evidence="1">Envelope glycoprotein that forms spikes at the surface of virion envelope. Essential for the initial attachment to heparan sulfate moieties of the host cell surface proteoglycans. Involved in fusion of viral and cellular membranes leading to virus entry into the host cell. Following initial binding to its host receptors, membrane fusion is mediated by the fusion machinery composed at least of gB and the heterodimer gH/gL. May be involved in the fusion between the virion envelope and the outer nuclear membrane during virion egress.</text>
</comment>
<comment type="subunit">
    <text evidence="1">Homotrimer; disulfide-linked. Binds to heparan sulfate proteoglycans. Interacts with gH/gL heterodimer.</text>
</comment>
<comment type="subcellular location">
    <subcellularLocation>
        <location evidence="1">Virion membrane</location>
        <topology evidence="1">Single-pass type I membrane protein</topology>
    </subcellularLocation>
    <subcellularLocation>
        <location evidence="1">Host cell membrane</location>
        <topology evidence="1">Single-pass type I membrane protein</topology>
    </subcellularLocation>
    <subcellularLocation>
        <location evidence="1">Host endosome membrane</location>
        <topology evidence="1">Single-pass type I membrane protein</topology>
    </subcellularLocation>
    <subcellularLocation>
        <location evidence="1">Host Golgi apparatus membrane</location>
        <topology evidence="1">Single-pass type I membrane protein</topology>
    </subcellularLocation>
    <text evidence="1">During virion morphogenesis, this protein probably accumulates in the endosomes and trans-Golgi where secondary envelopment occurs. It is probably transported to the cell surface from where it is endocytosed and directed to the trans-Golgi network (TGN).</text>
</comment>
<comment type="PTM">
    <text evidence="3">A proteolytic cleavage by host furin generates two subunits that remain linked by disulfide bonds.</text>
</comment>
<comment type="similarity">
    <text evidence="1">Belongs to the herpesviridae glycoprotein B family.</text>
</comment>
<gene>
    <name evidence="1" type="primary">gB</name>
    <name type="synonym">8</name>
</gene>
<proteinExistence type="inferred from homology"/>
<accession>O36362</accession>
<evidence type="ECO:0000255" key="1">
    <source>
        <dbReference type="HAMAP-Rule" id="MF_04032"/>
    </source>
</evidence>
<evidence type="ECO:0000256" key="2">
    <source>
        <dbReference type="SAM" id="MobiDB-lite"/>
    </source>
</evidence>
<evidence type="ECO:0000305" key="3"/>
<reference key="1">
    <citation type="journal article" date="1997" name="J. Virol.">
        <title>Primary structure of the alcelaphine herpesvirus 1 genome.</title>
        <authorList>
            <person name="Ensser A."/>
            <person name="Pflanz R."/>
            <person name="Fleckenstein B."/>
        </authorList>
    </citation>
    <scope>NUCLEOTIDE SEQUENCE [LARGE SCALE GENOMIC DNA]</scope>
</reference>
<protein>
    <recommendedName>
        <fullName evidence="1">Envelope glycoprotein B</fullName>
        <shortName evidence="1">gB</shortName>
    </recommendedName>
</protein>
<feature type="signal peptide" evidence="1">
    <location>
        <begin position="1"/>
        <end position="22"/>
    </location>
</feature>
<feature type="chain" id="PRO_0000405745" description="Envelope glycoprotein B" evidence="1">
    <location>
        <begin position="23"/>
        <end position="854"/>
    </location>
</feature>
<feature type="topological domain" description="Virion surface" evidence="1">
    <location>
        <begin position="23"/>
        <end position="732"/>
    </location>
</feature>
<feature type="transmembrane region" description="Helical" evidence="1">
    <location>
        <begin position="733"/>
        <end position="753"/>
    </location>
</feature>
<feature type="topological domain" description="Intravirion" evidence="1">
    <location>
        <begin position="754"/>
        <end position="854"/>
    </location>
</feature>
<feature type="region of interest" description="Involved in fusion and/or binding to host membrane" evidence="1">
    <location>
        <begin position="125"/>
        <end position="131"/>
    </location>
</feature>
<feature type="region of interest" description="Involved in fusion and/or binding to host membrane" evidence="1">
    <location>
        <begin position="209"/>
        <end position="217"/>
    </location>
</feature>
<feature type="region of interest" description="Disordered" evidence="2">
    <location>
        <begin position="422"/>
        <end position="443"/>
    </location>
</feature>
<feature type="region of interest" description="Hydrophobic membrane proximal region" evidence="1">
    <location>
        <begin position="679"/>
        <end position="730"/>
    </location>
</feature>
<feature type="region of interest" description="Disordered" evidence="2">
    <location>
        <begin position="802"/>
        <end position="829"/>
    </location>
</feature>
<feature type="short sequence motif" description="Internalization motif" evidence="1">
    <location>
        <begin position="839"/>
        <end position="842"/>
    </location>
</feature>
<feature type="compositionally biased region" description="Basic and acidic residues" evidence="2">
    <location>
        <begin position="802"/>
        <end position="813"/>
    </location>
</feature>
<feature type="glycosylation site" description="N-linked (GlcNAc...) asparagine; by host" evidence="1">
    <location>
        <position position="51"/>
    </location>
</feature>
<feature type="glycosylation site" description="N-linked (GlcNAc...) asparagine; by host" evidence="1">
    <location>
        <position position="180"/>
    </location>
</feature>
<feature type="glycosylation site" description="N-linked (GlcNAc...) asparagine; by host" evidence="1">
    <location>
        <position position="258"/>
    </location>
</feature>
<feature type="glycosylation site" description="N-linked (GlcNAc...) asparagine; by host" evidence="1">
    <location>
        <position position="311"/>
    </location>
</feature>
<feature type="glycosylation site" description="N-linked (GlcNAc...) asparagine; by host" evidence="1">
    <location>
        <position position="364"/>
    </location>
</feature>
<feature type="glycosylation site" description="N-linked (GlcNAc...) asparagine; by host" evidence="1">
    <location>
        <position position="379"/>
    </location>
</feature>
<feature type="glycosylation site" description="N-linked (GlcNAc...) asparagine; by host" evidence="1">
    <location>
        <position position="385"/>
    </location>
</feature>
<feature type="glycosylation site" description="N-linked (GlcNAc...) asparagine; by host" evidence="1">
    <location>
        <position position="424"/>
    </location>
</feature>
<feature type="glycosylation site" description="N-linked (GlcNAc...) asparagine; by host" evidence="1">
    <location>
        <position position="564"/>
    </location>
</feature>
<feature type="glycosylation site" description="N-linked (GlcNAc...) asparagine; by host" evidence="1">
    <location>
        <position position="630"/>
    </location>
</feature>
<feature type="disulfide bond" evidence="1">
    <location>
        <begin position="69"/>
        <end position="527"/>
    </location>
</feature>
<feature type="disulfide bond" evidence="1">
    <location>
        <begin position="86"/>
        <end position="483"/>
    </location>
</feature>
<feature type="disulfide bond" evidence="1">
    <location>
        <begin position="158"/>
        <end position="223"/>
    </location>
</feature>
<feature type="disulfide bond" evidence="1">
    <location>
        <begin position="315"/>
        <end position="362"/>
    </location>
</feature>
<feature type="disulfide bond" evidence="1">
    <location>
        <begin position="552"/>
        <end position="589"/>
    </location>
</feature>
<sequence length="854" mass="97060">MAHTGSTVCAFLIFAVLKNVFCQTPTSSSEVEDVIPEANTVSDNIIRQQRNNTAKGIHSDPSAFPFRVCSASNIGDIFRFQTSHSCPNTKDKEHNEGILLIFKENIVPYVFKVRKYRKIVTTSTIYNGIYADAVTNQHVFSKSVPIYETRRMDTIYQCYNSLDVTVGGNLLVYTDNDGSNMTVDLQPVDGLSNSVRRYHSQPEIHAEPGWLLGGYRRRTTVNCEVTETDARAVPPFRYFITNIGDTIEMSPFWSKAWNETEFSGEPDRTLTVAKDYRVVDYKFRGTQPQGHTRIFVDKEEYTLSWAQQFRNISYCRWAHWKSFDNAIKTEHGKSLHFVANDITASFYTPNTQTREVLGKHVCLNNTIESELKSRLAKVNDTHSPNGTAQYYLTNGGLLLVWQPLVQQKLLDAKGLLDAVKKQQNTTTTTTTTRSRRQRRSVSSGIDDVYTAESTILLTQIQFAYDTLRAQINNVLEELSRAWCREQHRASLMWNELSKINPTSVMSSIYGRPVSAKRIGDVISVSHCVVVDQDSVSLHRSMRVPGRDKTHECYSRPPVTFKFINDSHLYKGQLGVNNEILLTTTAVEICHENTEHYFQGGNNMYFYKNYRHVKTMPVGDVATLDTFMVLNLTLVENIDFQVIELYSREEKRMSTAFDIETMFREYNYYTQRVTGLRRDLTDLATNRNQFVDAFGSLMDDLGVVGKTVLNAVSSVATLFSSIVSGIINFIKNPFGGMLLFGLIAAVVITVILLNRKAKRFAQNPVQMIYPDIKTITSQREELQVDPISKHELDRIMLAMHDYHASKQPESKQDEEQGSTTSGPADWLNKAKNVLRRRAGYKPLKRTDSFESTGVP</sequence>
<dbReference type="EMBL" id="AF005370">
    <property type="protein sequence ID" value="AAC58059.1"/>
    <property type="molecule type" value="Genomic_DNA"/>
</dbReference>
<dbReference type="PIR" id="T03107">
    <property type="entry name" value="T03107"/>
</dbReference>
<dbReference type="RefSeq" id="NP_065511.1">
    <property type="nucleotide sequence ID" value="NC_002531.1"/>
</dbReference>
<dbReference type="SMR" id="O36362"/>
<dbReference type="GlyCosmos" id="O36362">
    <property type="glycosylation" value="10 sites, No reported glycans"/>
</dbReference>
<dbReference type="KEGG" id="vg:911747"/>
<dbReference type="Proteomes" id="UP000000941">
    <property type="component" value="Segment"/>
</dbReference>
<dbReference type="GO" id="GO:0044175">
    <property type="term" value="C:host cell endosome membrane"/>
    <property type="evidence" value="ECO:0007669"/>
    <property type="project" value="UniProtKB-SubCell"/>
</dbReference>
<dbReference type="GO" id="GO:0044178">
    <property type="term" value="C:host cell Golgi membrane"/>
    <property type="evidence" value="ECO:0007669"/>
    <property type="project" value="UniProtKB-SubCell"/>
</dbReference>
<dbReference type="GO" id="GO:0020002">
    <property type="term" value="C:host cell plasma membrane"/>
    <property type="evidence" value="ECO:0007669"/>
    <property type="project" value="UniProtKB-SubCell"/>
</dbReference>
<dbReference type="GO" id="GO:0016020">
    <property type="term" value="C:membrane"/>
    <property type="evidence" value="ECO:0007669"/>
    <property type="project" value="UniProtKB-KW"/>
</dbReference>
<dbReference type="GO" id="GO:0019031">
    <property type="term" value="C:viral envelope"/>
    <property type="evidence" value="ECO:0007669"/>
    <property type="project" value="UniProtKB-KW"/>
</dbReference>
<dbReference type="GO" id="GO:0055036">
    <property type="term" value="C:virion membrane"/>
    <property type="evidence" value="ECO:0007669"/>
    <property type="project" value="UniProtKB-SubCell"/>
</dbReference>
<dbReference type="GO" id="GO:0046718">
    <property type="term" value="P:symbiont entry into host cell"/>
    <property type="evidence" value="ECO:0007669"/>
    <property type="project" value="UniProtKB-KW"/>
</dbReference>
<dbReference type="GO" id="GO:0019062">
    <property type="term" value="P:virion attachment to host cell"/>
    <property type="evidence" value="ECO:0007669"/>
    <property type="project" value="UniProtKB-KW"/>
</dbReference>
<dbReference type="Gene3D" id="1.20.5.1890">
    <property type="match status" value="1"/>
</dbReference>
<dbReference type="Gene3D" id="2.30.29.100">
    <property type="match status" value="1"/>
</dbReference>
<dbReference type="Gene3D" id="2.30.30.1230">
    <property type="match status" value="1"/>
</dbReference>
<dbReference type="Gene3D" id="6.10.250.3280">
    <property type="match status" value="1"/>
</dbReference>
<dbReference type="HAMAP" id="MF_04032">
    <property type="entry name" value="HSV_GB"/>
    <property type="match status" value="1"/>
</dbReference>
<dbReference type="InterPro" id="IPR035377">
    <property type="entry name" value="Glycoprot_B_PH1"/>
</dbReference>
<dbReference type="InterPro" id="IPR035381">
    <property type="entry name" value="Glycoprot_B_PH2"/>
</dbReference>
<dbReference type="InterPro" id="IPR038631">
    <property type="entry name" value="Glycoprot_B_PH2_sf"/>
</dbReference>
<dbReference type="InterPro" id="IPR055341">
    <property type="entry name" value="Glycoprotein_B_ecto_C"/>
</dbReference>
<dbReference type="InterPro" id="IPR000234">
    <property type="entry name" value="Herpes_Glycoprot_B"/>
</dbReference>
<dbReference type="Pfam" id="PF17416">
    <property type="entry name" value="Glycoprot_B_PH1"/>
    <property type="match status" value="1"/>
</dbReference>
<dbReference type="Pfam" id="PF17417">
    <property type="entry name" value="Glycoprot_B_PH2"/>
    <property type="match status" value="1"/>
</dbReference>
<dbReference type="Pfam" id="PF00606">
    <property type="entry name" value="Glycoprotein_B"/>
    <property type="match status" value="1"/>
</dbReference>
<dbReference type="SUPFAM" id="SSF161008">
    <property type="entry name" value="Viral glycoprotein ectodomain-like"/>
    <property type="match status" value="1"/>
</dbReference>
<keyword id="KW-1015">Disulfide bond</keyword>
<keyword id="KW-0325">Glycoprotein</keyword>
<keyword id="KW-1032">Host cell membrane</keyword>
<keyword id="KW-1039">Host endosome</keyword>
<keyword id="KW-1040">Host Golgi apparatus</keyword>
<keyword id="KW-1043">Host membrane</keyword>
<keyword id="KW-0945">Host-virus interaction</keyword>
<keyword id="KW-0472">Membrane</keyword>
<keyword id="KW-1185">Reference proteome</keyword>
<keyword id="KW-0732">Signal</keyword>
<keyword id="KW-0812">Transmembrane</keyword>
<keyword id="KW-1133">Transmembrane helix</keyword>
<keyword id="KW-1161">Viral attachment to host cell</keyword>
<keyword id="KW-0261">Viral envelope protein</keyword>
<keyword id="KW-0946">Virion</keyword>
<keyword id="KW-1160">Virus entry into host cell</keyword>